<accession>B5BIY1</accession>
<protein>
    <recommendedName>
        <fullName evidence="1">Probable protein kinase UbiB</fullName>
        <ecNumber evidence="1">2.7.-.-</ecNumber>
    </recommendedName>
    <alternativeName>
        <fullName evidence="1">Ubiquinone biosynthesis protein UbiB</fullName>
    </alternativeName>
</protein>
<dbReference type="EC" id="2.7.-.-" evidence="1"/>
<dbReference type="EMBL" id="FM200053">
    <property type="protein sequence ID" value="CAR61830.1"/>
    <property type="molecule type" value="Genomic_DNA"/>
</dbReference>
<dbReference type="RefSeq" id="WP_000187559.1">
    <property type="nucleotide sequence ID" value="NC_011147.1"/>
</dbReference>
<dbReference type="SMR" id="B5BIY1"/>
<dbReference type="KEGG" id="sek:SSPA3551"/>
<dbReference type="HOGENOM" id="CLU_006533_0_0_6"/>
<dbReference type="UniPathway" id="UPA00232"/>
<dbReference type="Proteomes" id="UP000001869">
    <property type="component" value="Chromosome"/>
</dbReference>
<dbReference type="GO" id="GO:0005886">
    <property type="term" value="C:plasma membrane"/>
    <property type="evidence" value="ECO:0007669"/>
    <property type="project" value="UniProtKB-SubCell"/>
</dbReference>
<dbReference type="GO" id="GO:0005524">
    <property type="term" value="F:ATP binding"/>
    <property type="evidence" value="ECO:0007669"/>
    <property type="project" value="UniProtKB-KW"/>
</dbReference>
<dbReference type="GO" id="GO:0004672">
    <property type="term" value="F:protein kinase activity"/>
    <property type="evidence" value="ECO:0007669"/>
    <property type="project" value="UniProtKB-UniRule"/>
</dbReference>
<dbReference type="GO" id="GO:0010795">
    <property type="term" value="P:regulation of ubiquinone biosynthetic process"/>
    <property type="evidence" value="ECO:0007669"/>
    <property type="project" value="UniProtKB-UniRule"/>
</dbReference>
<dbReference type="GO" id="GO:0006744">
    <property type="term" value="P:ubiquinone biosynthetic process"/>
    <property type="evidence" value="ECO:0007669"/>
    <property type="project" value="UniProtKB-UniPathway"/>
</dbReference>
<dbReference type="CDD" id="cd13972">
    <property type="entry name" value="UbiB"/>
    <property type="match status" value="1"/>
</dbReference>
<dbReference type="HAMAP" id="MF_00414">
    <property type="entry name" value="UbiB"/>
    <property type="match status" value="1"/>
</dbReference>
<dbReference type="InterPro" id="IPR004147">
    <property type="entry name" value="ABC1_dom"/>
</dbReference>
<dbReference type="InterPro" id="IPR011009">
    <property type="entry name" value="Kinase-like_dom_sf"/>
</dbReference>
<dbReference type="InterPro" id="IPR010232">
    <property type="entry name" value="UbiB"/>
</dbReference>
<dbReference type="InterPro" id="IPR045308">
    <property type="entry name" value="UbiB_bact"/>
</dbReference>
<dbReference type="InterPro" id="IPR050154">
    <property type="entry name" value="UbiB_kinase"/>
</dbReference>
<dbReference type="NCBIfam" id="NF003404">
    <property type="entry name" value="PRK04750.1"/>
    <property type="match status" value="1"/>
</dbReference>
<dbReference type="NCBIfam" id="TIGR01982">
    <property type="entry name" value="UbiB"/>
    <property type="match status" value="1"/>
</dbReference>
<dbReference type="PANTHER" id="PTHR10566">
    <property type="entry name" value="CHAPERONE-ACTIVITY OF BC1 COMPLEX CABC1 -RELATED"/>
    <property type="match status" value="1"/>
</dbReference>
<dbReference type="PANTHER" id="PTHR10566:SF113">
    <property type="entry name" value="PROTEIN ACTIVITY OF BC1 COMPLEX KINASE 7, CHLOROPLASTIC"/>
    <property type="match status" value="1"/>
</dbReference>
<dbReference type="Pfam" id="PF03109">
    <property type="entry name" value="ABC1"/>
    <property type="match status" value="1"/>
</dbReference>
<dbReference type="SUPFAM" id="SSF56112">
    <property type="entry name" value="Protein kinase-like (PK-like)"/>
    <property type="match status" value="1"/>
</dbReference>
<organism>
    <name type="scientific">Salmonella paratyphi A (strain AKU_12601)</name>
    <dbReference type="NCBI Taxonomy" id="554290"/>
    <lineage>
        <taxon>Bacteria</taxon>
        <taxon>Pseudomonadati</taxon>
        <taxon>Pseudomonadota</taxon>
        <taxon>Gammaproteobacteria</taxon>
        <taxon>Enterobacterales</taxon>
        <taxon>Enterobacteriaceae</taxon>
        <taxon>Salmonella</taxon>
    </lineage>
</organism>
<keyword id="KW-0067">ATP-binding</keyword>
<keyword id="KW-0997">Cell inner membrane</keyword>
<keyword id="KW-1003">Cell membrane</keyword>
<keyword id="KW-0418">Kinase</keyword>
<keyword id="KW-0472">Membrane</keyword>
<keyword id="KW-0547">Nucleotide-binding</keyword>
<keyword id="KW-0808">Transferase</keyword>
<keyword id="KW-0812">Transmembrane</keyword>
<keyword id="KW-1133">Transmembrane helix</keyword>
<keyword id="KW-0831">Ubiquinone biosynthesis</keyword>
<comment type="function">
    <text evidence="1">Is probably a protein kinase regulator of UbiI activity which is involved in aerobic coenzyme Q (ubiquinone) biosynthesis.</text>
</comment>
<comment type="pathway">
    <text>Cofactor biosynthesis; ubiquinone biosynthesis [regulation].</text>
</comment>
<comment type="subcellular location">
    <subcellularLocation>
        <location evidence="1">Cell inner membrane</location>
        <topology evidence="1">Multi-pass membrane protein</topology>
    </subcellularLocation>
</comment>
<comment type="similarity">
    <text evidence="1">Belongs to the ABC1 family. UbiB subfamily.</text>
</comment>
<gene>
    <name evidence="1" type="primary">ubiB</name>
    <name type="ordered locus">SSPA3551</name>
</gene>
<reference key="1">
    <citation type="journal article" date="2009" name="BMC Genomics">
        <title>Pseudogene accumulation in the evolutionary histories of Salmonella enterica serovars Paratyphi A and Typhi.</title>
        <authorList>
            <person name="Holt K.E."/>
            <person name="Thomson N.R."/>
            <person name="Wain J."/>
            <person name="Langridge G.C."/>
            <person name="Hasan R."/>
            <person name="Bhutta Z.A."/>
            <person name="Quail M.A."/>
            <person name="Norbertczak H."/>
            <person name="Walker D."/>
            <person name="Simmonds M."/>
            <person name="White B."/>
            <person name="Bason N."/>
            <person name="Mungall K."/>
            <person name="Dougan G."/>
            <person name="Parkhill J."/>
        </authorList>
    </citation>
    <scope>NUCLEOTIDE SEQUENCE [LARGE SCALE GENOMIC DNA]</scope>
    <source>
        <strain>AKU_12601</strain>
    </source>
</reference>
<name>UBIB_SALPK</name>
<sequence length="546" mass="63239">MTPGEVRRLYFIIRTFLSYGLDELIPRMRLTLPLRLWRYSLFWMPNRHKDKLLGERLRLALQELGPVWIKFGQMLSTRRDLFPPQIADQLALLQDKVAPFDGRLAKAQIEEAMGGLPVEAWFDDFDIQPLASASIAQVHTARLKSNGKEVVIKVIRPDILPVIQADLKLIYRLARWVPRLLPDGRRLRPTEVVREYEKTLIDELNLLRESANAIQLRRNFENSPMLYIPEVYSDYCSQNMMVMERIYGIPVSDVAALEKNGTNMKLLAERGVKVFFTQVFRDSFFHADMHPGNIFVSHEHPENPQYIGIDCGIVGSLNKEDKRYLAENFIAFFNRDYRKVAELHVDSGWVPPDTNVEDFEFAIRTVCEPIFEKPLAEISFGHVLLNLFNTARRFNMEVQPQLVLLQKTLLYVEGVGRQLYPQLDLWKTAKPFLESWIKDQVGIPALTRALKEKAPFWVEKMPEIPELVYDSLRQGKYLQHSVDKIARELQVNHVRQSQSRYLLGIGATLLLSGSFLLVNRPEWGLMPGWLMVGGVVVWLVGWRKTR</sequence>
<evidence type="ECO:0000255" key="1">
    <source>
        <dbReference type="HAMAP-Rule" id="MF_00414"/>
    </source>
</evidence>
<proteinExistence type="inferred from homology"/>
<feature type="chain" id="PRO_1000123922" description="Probable protein kinase UbiB">
    <location>
        <begin position="1"/>
        <end position="546"/>
    </location>
</feature>
<feature type="transmembrane region" description="Helical" evidence="1">
    <location>
        <begin position="501"/>
        <end position="521"/>
    </location>
</feature>
<feature type="transmembrane region" description="Helical" evidence="1">
    <location>
        <begin position="522"/>
        <end position="542"/>
    </location>
</feature>
<feature type="domain" description="Protein kinase" evidence="1">
    <location>
        <begin position="124"/>
        <end position="502"/>
    </location>
</feature>
<feature type="active site" description="Proton acceptor" evidence="1">
    <location>
        <position position="288"/>
    </location>
</feature>
<feature type="binding site" evidence="1">
    <location>
        <begin position="130"/>
        <end position="138"/>
    </location>
    <ligand>
        <name>ATP</name>
        <dbReference type="ChEBI" id="CHEBI:30616"/>
    </ligand>
</feature>
<feature type="binding site" evidence="1">
    <location>
        <position position="153"/>
    </location>
    <ligand>
        <name>ATP</name>
        <dbReference type="ChEBI" id="CHEBI:30616"/>
    </ligand>
</feature>